<organism>
    <name type="scientific">Plasmodium falciparum (isolate 3D7)</name>
    <dbReference type="NCBI Taxonomy" id="36329"/>
    <lineage>
        <taxon>Eukaryota</taxon>
        <taxon>Sar</taxon>
        <taxon>Alveolata</taxon>
        <taxon>Apicomplexa</taxon>
        <taxon>Aconoidasida</taxon>
        <taxon>Haemosporida</taxon>
        <taxon>Plasmodiidae</taxon>
        <taxon>Plasmodium</taxon>
        <taxon>Plasmodium (Laverania)</taxon>
    </lineage>
</organism>
<protein>
    <recommendedName>
        <fullName evidence="5">Uncharacterized protein PFA0635c</fullName>
    </recommendedName>
</protein>
<accession>Q9U0M8</accession>
<keyword id="KW-0175">Coiled coil</keyword>
<keyword id="KW-0472">Membrane</keyword>
<keyword id="KW-0477">Merozoite</keyword>
<keyword id="KW-1185">Reference proteome</keyword>
<keyword id="KW-0812">Transmembrane</keyword>
<keyword id="KW-1133">Transmembrane helix</keyword>
<feature type="chain" id="PRO_0000371503" description="Uncharacterized protein PFA0635c">
    <location>
        <begin position="1"/>
        <end position="584"/>
    </location>
</feature>
<feature type="transmembrane region" description="Helical" evidence="1">
    <location>
        <begin position="15"/>
        <end position="35"/>
    </location>
</feature>
<feature type="region of interest" description="Disordered" evidence="2">
    <location>
        <begin position="184"/>
        <end position="226"/>
    </location>
</feature>
<feature type="coiled-coil region" evidence="1">
    <location>
        <begin position="267"/>
        <end position="319"/>
    </location>
</feature>
<feature type="coiled-coil region" evidence="1">
    <location>
        <begin position="436"/>
        <end position="477"/>
    </location>
</feature>
<feature type="compositionally biased region" description="Polar residues" evidence="2">
    <location>
        <begin position="184"/>
        <end position="194"/>
    </location>
</feature>
<feature type="compositionally biased region" description="Polar residues" evidence="2">
    <location>
        <begin position="204"/>
        <end position="225"/>
    </location>
</feature>
<sequence>MKNIKNMKNIKSEGFIFFVLVFFICIIFGCIYESLHEGPYKKTLNSLHESTKYRHFNKIRLLTEYKDTLQIKVEQKSLRDYVNNDRYNNVNTNDYTSYKDKGEQFNDTICVVDKKKENVTINNEEECNKNFYQYLQYLEHNNKQDNKYEETNYFLQGNDKHIDSEHNGINKMYKETIHKTLTSDVSTENSYTHNNSRDDEPQNGKRTYNNQSNNNLPYDNSSYNISPYHGPNNNVPYNKSNNFEQCNTQDNKHCNDLDTYHTCYGPDNYPQKYDNYRQECDNYRQECDNYRQEYDNYPQKYDNYRQECDNYRQEYDNYPHGFDNYPRGFDNYPHGYDNHPHRPHIYPHGFDNHPHRPHMYPHNFPMRNESVGGPYYRPPHIIERSNYYKNPKKAPHNMMLPCDTMKDNKSICDEQNFQRELEKIIKKNNLQNGNIRDNHDTRINDYNKRLTEYNKRLTEYNKRLTEYTKRLNEHYKRNGYNIQNRQNSIERAQSNDVVLYGHNFQNAFRYKQNTRSYYPHVNSNEATHHQKTMYFTQQNNYSREEYPIKSEQHLYHVKSKRLEKKLYDYQNGTNPVTNFLERHF</sequence>
<proteinExistence type="evidence at protein level"/>
<name>YPF06_PLAF7</name>
<reference key="1">
    <citation type="journal article" date="2002" name="Nature">
        <title>Genome sequence of the human malaria parasite Plasmodium falciparum.</title>
        <authorList>
            <person name="Gardner M.J."/>
            <person name="Hall N."/>
            <person name="Fung E."/>
            <person name="White O."/>
            <person name="Berriman M."/>
            <person name="Hyman R.W."/>
            <person name="Carlton J.M."/>
            <person name="Pain A."/>
            <person name="Nelson K.E."/>
            <person name="Bowman S."/>
            <person name="Paulsen I.T."/>
            <person name="James K.D."/>
            <person name="Eisen J.A."/>
            <person name="Rutherford K.M."/>
            <person name="Salzberg S.L."/>
            <person name="Craig A."/>
            <person name="Kyes S."/>
            <person name="Chan M.-S."/>
            <person name="Nene V."/>
            <person name="Shallom S.J."/>
            <person name="Suh B."/>
            <person name="Peterson J."/>
            <person name="Angiuoli S."/>
            <person name="Pertea M."/>
            <person name="Allen J."/>
            <person name="Selengut J."/>
            <person name="Haft D."/>
            <person name="Mather M.W."/>
            <person name="Vaidya A.B."/>
            <person name="Martin D.M.A."/>
            <person name="Fairlamb A.H."/>
            <person name="Fraunholz M.J."/>
            <person name="Roos D.S."/>
            <person name="Ralph S.A."/>
            <person name="McFadden G.I."/>
            <person name="Cummings L.M."/>
            <person name="Subramanian G.M."/>
            <person name="Mungall C."/>
            <person name="Venter J.C."/>
            <person name="Carucci D.J."/>
            <person name="Hoffman S.L."/>
            <person name="Newbold C."/>
            <person name="Davis R.W."/>
            <person name="Fraser C.M."/>
            <person name="Barrell B.G."/>
        </authorList>
    </citation>
    <scope>NUCLEOTIDE SEQUENCE [LARGE SCALE GENOMIC DNA]</scope>
    <source>
        <strain>3D7</strain>
    </source>
</reference>
<reference evidence="5" key="2">
    <citation type="journal article" date="2002" name="Nature">
        <title>Sequence of Plasmodium falciparum chromosomes 1, 3-9 and 13.</title>
        <authorList>
            <person name="Hall N."/>
            <person name="Pain A."/>
            <person name="Berriman M."/>
            <person name="Churcher C.M."/>
            <person name="Harris B."/>
            <person name="Harris D."/>
            <person name="Mungall K.L."/>
            <person name="Bowman S."/>
            <person name="Atkin R."/>
            <person name="Baker S."/>
            <person name="Barron A."/>
            <person name="Brooks K."/>
            <person name="Buckee C.O."/>
            <person name="Burrows C."/>
            <person name="Cherevach I."/>
            <person name="Chillingworth C."/>
            <person name="Chillingworth T."/>
            <person name="Christodoulou Z."/>
            <person name="Clark L."/>
            <person name="Clark R."/>
            <person name="Corton C."/>
            <person name="Cronin A."/>
            <person name="Davies R.M."/>
            <person name="Davis P."/>
            <person name="Dear P."/>
            <person name="Dearden F."/>
            <person name="Doggett J."/>
            <person name="Feltwell T."/>
            <person name="Goble A."/>
            <person name="Goodhead I."/>
            <person name="Gwilliam R."/>
            <person name="Hamlin N."/>
            <person name="Hance Z."/>
            <person name="Harper D."/>
            <person name="Hauser H."/>
            <person name="Hornsby T."/>
            <person name="Holroyd S."/>
            <person name="Horrocks P."/>
            <person name="Humphray S."/>
            <person name="Jagels K."/>
            <person name="James K.D."/>
            <person name="Johnson D."/>
            <person name="Kerhornou A."/>
            <person name="Knights A."/>
            <person name="Konfortov B."/>
            <person name="Kyes S."/>
            <person name="Larke N."/>
            <person name="Lawson D."/>
            <person name="Lennard N."/>
            <person name="Line A."/>
            <person name="Maddison M."/>
            <person name="Mclean J."/>
            <person name="Mooney P."/>
            <person name="Moule S."/>
            <person name="Murphy L."/>
            <person name="Oliver K."/>
            <person name="Ormond D."/>
            <person name="Price C."/>
            <person name="Quail M.A."/>
            <person name="Rabbinowitsch E."/>
            <person name="Rajandream M.A."/>
            <person name="Rutter S."/>
            <person name="Rutherford K.M."/>
            <person name="Sanders M."/>
            <person name="Simmonds M."/>
            <person name="Seeger K."/>
            <person name="Sharp S."/>
            <person name="Smith R."/>
            <person name="Squares R."/>
            <person name="Squares S."/>
            <person name="Stevens K."/>
            <person name="Taylor K."/>
            <person name="Tivey A."/>
            <person name="Unwin L."/>
            <person name="Whitehead S."/>
            <person name="Woodward J.R."/>
            <person name="Sulston J.E."/>
            <person name="Craig A."/>
            <person name="Newbold C."/>
            <person name="Barrell B.G."/>
        </authorList>
    </citation>
    <scope>NUCLEOTIDE SEQUENCE [LARGE SCALE GENOMIC DNA]</scope>
    <source>
        <strain>3D7</strain>
    </source>
</reference>
<reference evidence="4" key="3">
    <citation type="journal article" date="2007" name="PLoS ONE">
        <title>Rapid identification of malaria vaccine candidates based on alpha-helical coiled coil protein motif.</title>
        <authorList>
            <person name="Villard V."/>
            <person name="Agak G.W."/>
            <person name="Frank G."/>
            <person name="Jafarshad A."/>
            <person name="Servis C."/>
            <person name="Nebie I."/>
            <person name="Sirima S.B."/>
            <person name="Felger I."/>
            <person name="Arevalo-Herrera M."/>
            <person name="Herrera S."/>
            <person name="Heitz F."/>
            <person name="Baecker V."/>
            <person name="Druilhe P."/>
            <person name="Kajava A.V."/>
            <person name="Corradin G."/>
        </authorList>
    </citation>
    <scope>SYNTHESIS OF 438-473</scope>
    <scope>POSSIBLE CANDIDATE MALARIA EPITOPE</scope>
</reference>
<gene>
    <name type="ORF">PFA0635c</name>
</gene>
<dbReference type="EMBL" id="AL844501">
    <property type="protein sequence ID" value="CAB63564.1"/>
    <property type="molecule type" value="Genomic_DNA"/>
</dbReference>
<dbReference type="RefSeq" id="XP_001351056.1">
    <property type="nucleotide sequence ID" value="XM_001351020.1"/>
</dbReference>
<dbReference type="SMR" id="Q9U0M8"/>
<dbReference type="IntAct" id="Q9U0M8">
    <property type="interactions" value="4"/>
</dbReference>
<dbReference type="STRING" id="36329.Q9U0M8"/>
<dbReference type="PaxDb" id="5833-PFA0635c"/>
<dbReference type="EnsemblProtists" id="CAB63564">
    <property type="protein sequence ID" value="CAB63564"/>
    <property type="gene ID" value="PF3D7_0113300"/>
</dbReference>
<dbReference type="KEGG" id="pfa:PF3D7_0113300"/>
<dbReference type="VEuPathDB" id="PlasmoDB:PF3D7_0113300"/>
<dbReference type="HOGENOM" id="CLU_467349_0_0_1"/>
<dbReference type="InParanoid" id="Q9U0M8"/>
<dbReference type="OMA" id="YTYQHSR"/>
<dbReference type="OrthoDB" id="378075at2759"/>
<dbReference type="PhylomeDB" id="Q9U0M8"/>
<dbReference type="Proteomes" id="UP000001450">
    <property type="component" value="Chromosome 1"/>
</dbReference>
<dbReference type="GO" id="GO:0016020">
    <property type="term" value="C:membrane"/>
    <property type="evidence" value="ECO:0007669"/>
    <property type="project" value="UniProtKB-SubCell"/>
</dbReference>
<evidence type="ECO:0000255" key="1"/>
<evidence type="ECO:0000256" key="2">
    <source>
        <dbReference type="SAM" id="MobiDB-lite"/>
    </source>
</evidence>
<evidence type="ECO:0000269" key="3">
    <source>
    </source>
</evidence>
<evidence type="ECO:0000305" key="4"/>
<evidence type="ECO:0000312" key="5">
    <source>
        <dbReference type="EMBL" id="CAB63564.1"/>
    </source>
</evidence>
<comment type="subcellular location">
    <subcellularLocation>
        <location evidence="1">Membrane</location>
        <topology evidence="1">Single-pass membrane protein</topology>
    </subcellularLocation>
</comment>
<comment type="biotechnology">
    <text evidence="3">Possible candidate for an effective malaria vaccine as determined by epitope response in sera.</text>
</comment>